<accession>A0LH27</accession>
<dbReference type="EMBL" id="CP000478">
    <property type="protein sequence ID" value="ABK16729.1"/>
    <property type="molecule type" value="Genomic_DNA"/>
</dbReference>
<dbReference type="RefSeq" id="WP_011697900.1">
    <property type="nucleotide sequence ID" value="NC_008554.1"/>
</dbReference>
<dbReference type="SMR" id="A0LH27"/>
<dbReference type="FunCoup" id="A0LH27">
    <property type="interactions" value="505"/>
</dbReference>
<dbReference type="STRING" id="335543.Sfum_1035"/>
<dbReference type="KEGG" id="sfu:Sfum_1035"/>
<dbReference type="eggNOG" id="COG0576">
    <property type="taxonomic scope" value="Bacteria"/>
</dbReference>
<dbReference type="HOGENOM" id="CLU_057217_5_2_7"/>
<dbReference type="InParanoid" id="A0LH27"/>
<dbReference type="OrthoDB" id="9789811at2"/>
<dbReference type="Proteomes" id="UP000001784">
    <property type="component" value="Chromosome"/>
</dbReference>
<dbReference type="GO" id="GO:0005737">
    <property type="term" value="C:cytoplasm"/>
    <property type="evidence" value="ECO:0007669"/>
    <property type="project" value="UniProtKB-SubCell"/>
</dbReference>
<dbReference type="GO" id="GO:0000774">
    <property type="term" value="F:adenyl-nucleotide exchange factor activity"/>
    <property type="evidence" value="ECO:0007669"/>
    <property type="project" value="InterPro"/>
</dbReference>
<dbReference type="GO" id="GO:0042803">
    <property type="term" value="F:protein homodimerization activity"/>
    <property type="evidence" value="ECO:0007669"/>
    <property type="project" value="InterPro"/>
</dbReference>
<dbReference type="GO" id="GO:0051087">
    <property type="term" value="F:protein-folding chaperone binding"/>
    <property type="evidence" value="ECO:0007669"/>
    <property type="project" value="InterPro"/>
</dbReference>
<dbReference type="GO" id="GO:0051082">
    <property type="term" value="F:unfolded protein binding"/>
    <property type="evidence" value="ECO:0007669"/>
    <property type="project" value="TreeGrafter"/>
</dbReference>
<dbReference type="GO" id="GO:0006457">
    <property type="term" value="P:protein folding"/>
    <property type="evidence" value="ECO:0007669"/>
    <property type="project" value="InterPro"/>
</dbReference>
<dbReference type="CDD" id="cd00446">
    <property type="entry name" value="GrpE"/>
    <property type="match status" value="1"/>
</dbReference>
<dbReference type="FunFam" id="2.30.22.10:FF:000001">
    <property type="entry name" value="Protein GrpE"/>
    <property type="match status" value="1"/>
</dbReference>
<dbReference type="Gene3D" id="3.90.20.20">
    <property type="match status" value="1"/>
</dbReference>
<dbReference type="Gene3D" id="2.30.22.10">
    <property type="entry name" value="Head domain of nucleotide exchange factor GrpE"/>
    <property type="match status" value="1"/>
</dbReference>
<dbReference type="HAMAP" id="MF_01151">
    <property type="entry name" value="GrpE"/>
    <property type="match status" value="1"/>
</dbReference>
<dbReference type="InterPro" id="IPR000740">
    <property type="entry name" value="GrpE"/>
</dbReference>
<dbReference type="InterPro" id="IPR013805">
    <property type="entry name" value="GrpE_coiled_coil"/>
</dbReference>
<dbReference type="InterPro" id="IPR009012">
    <property type="entry name" value="GrpE_head"/>
</dbReference>
<dbReference type="NCBIfam" id="NF010738">
    <property type="entry name" value="PRK14140.1"/>
    <property type="match status" value="1"/>
</dbReference>
<dbReference type="PANTHER" id="PTHR21237">
    <property type="entry name" value="GRPE PROTEIN"/>
    <property type="match status" value="1"/>
</dbReference>
<dbReference type="PANTHER" id="PTHR21237:SF23">
    <property type="entry name" value="GRPE PROTEIN HOMOLOG, MITOCHONDRIAL"/>
    <property type="match status" value="1"/>
</dbReference>
<dbReference type="Pfam" id="PF01025">
    <property type="entry name" value="GrpE"/>
    <property type="match status" value="1"/>
</dbReference>
<dbReference type="PRINTS" id="PR00773">
    <property type="entry name" value="GRPEPROTEIN"/>
</dbReference>
<dbReference type="SUPFAM" id="SSF58014">
    <property type="entry name" value="Coiled-coil domain of nucleotide exchange factor GrpE"/>
    <property type="match status" value="1"/>
</dbReference>
<dbReference type="SUPFAM" id="SSF51064">
    <property type="entry name" value="Head domain of nucleotide exchange factor GrpE"/>
    <property type="match status" value="1"/>
</dbReference>
<dbReference type="PROSITE" id="PS01071">
    <property type="entry name" value="GRPE"/>
    <property type="match status" value="1"/>
</dbReference>
<name>GRPE_SYNFM</name>
<evidence type="ECO:0000255" key="1">
    <source>
        <dbReference type="HAMAP-Rule" id="MF_01151"/>
    </source>
</evidence>
<evidence type="ECO:0000256" key="2">
    <source>
        <dbReference type="SAM" id="MobiDB-lite"/>
    </source>
</evidence>
<feature type="chain" id="PRO_1000164225" description="Protein GrpE">
    <location>
        <begin position="1"/>
        <end position="189"/>
    </location>
</feature>
<feature type="region of interest" description="Disordered" evidence="2">
    <location>
        <begin position="1"/>
        <end position="31"/>
    </location>
</feature>
<gene>
    <name evidence="1" type="primary">grpE</name>
    <name type="ordered locus">Sfum_1035</name>
</gene>
<keyword id="KW-0143">Chaperone</keyword>
<keyword id="KW-0963">Cytoplasm</keyword>
<keyword id="KW-1185">Reference proteome</keyword>
<keyword id="KW-0346">Stress response</keyword>
<organism>
    <name type="scientific">Syntrophobacter fumaroxidans (strain DSM 10017 / MPOB)</name>
    <dbReference type="NCBI Taxonomy" id="335543"/>
    <lineage>
        <taxon>Bacteria</taxon>
        <taxon>Pseudomonadati</taxon>
        <taxon>Thermodesulfobacteriota</taxon>
        <taxon>Syntrophobacteria</taxon>
        <taxon>Syntrophobacterales</taxon>
        <taxon>Syntrophobacteraceae</taxon>
        <taxon>Syntrophobacter</taxon>
    </lineage>
</organism>
<reference key="1">
    <citation type="submission" date="2006-10" db="EMBL/GenBank/DDBJ databases">
        <title>Complete sequence of Syntrophobacter fumaroxidans MPOB.</title>
        <authorList>
            <consortium name="US DOE Joint Genome Institute"/>
            <person name="Copeland A."/>
            <person name="Lucas S."/>
            <person name="Lapidus A."/>
            <person name="Barry K."/>
            <person name="Detter J.C."/>
            <person name="Glavina del Rio T."/>
            <person name="Hammon N."/>
            <person name="Israni S."/>
            <person name="Pitluck S."/>
            <person name="Goltsman E.G."/>
            <person name="Martinez M."/>
            <person name="Schmutz J."/>
            <person name="Larimer F."/>
            <person name="Land M."/>
            <person name="Hauser L."/>
            <person name="Kyrpides N."/>
            <person name="Kim E."/>
            <person name="Boone D.R."/>
            <person name="Brockman F."/>
            <person name="Culley D."/>
            <person name="Ferry J."/>
            <person name="Gunsalus R."/>
            <person name="McInerney M.J."/>
            <person name="Morrison M."/>
            <person name="Plugge C."/>
            <person name="Rohlin L."/>
            <person name="Scholten J."/>
            <person name="Sieber J."/>
            <person name="Stams A.J.M."/>
            <person name="Worm P."/>
            <person name="Henstra A.M."/>
            <person name="Richardson P."/>
        </authorList>
    </citation>
    <scope>NUCLEOTIDE SEQUENCE [LARGE SCALE GENOMIC DNA]</scope>
    <source>
        <strain>DSM 10017 / MPOB</strain>
    </source>
</reference>
<comment type="function">
    <text evidence="1">Participates actively in the response to hyperosmotic and heat shock by preventing the aggregation of stress-denatured proteins, in association with DnaK and GrpE. It is the nucleotide exchange factor for DnaK and may function as a thermosensor. Unfolded proteins bind initially to DnaJ; upon interaction with the DnaJ-bound protein, DnaK hydrolyzes its bound ATP, resulting in the formation of a stable complex. GrpE releases ADP from DnaK; ATP binding to DnaK triggers the release of the substrate protein, thus completing the reaction cycle. Several rounds of ATP-dependent interactions between DnaJ, DnaK and GrpE are required for fully efficient folding.</text>
</comment>
<comment type="subunit">
    <text evidence="1">Homodimer.</text>
</comment>
<comment type="subcellular location">
    <subcellularLocation>
        <location evidence="1">Cytoplasm</location>
    </subcellularLocation>
</comment>
<comment type="similarity">
    <text evidence="1">Belongs to the GrpE family.</text>
</comment>
<protein>
    <recommendedName>
        <fullName evidence="1">Protein GrpE</fullName>
    </recommendedName>
    <alternativeName>
        <fullName evidence="1">HSP-70 cofactor</fullName>
    </alternativeName>
</protein>
<proteinExistence type="inferred from homology"/>
<sequence length="189" mass="21235">MSKKHMKGNGGEVPENSEMSGSEELVAVEPGEPDYRELLARKEEELKQSQDRLLRMAAELDNTRKRLEREKSEGIAYANEGLMKDLLPVLDNLERALEHSENEADCGSLVEGVRMTLKGFLDSLARFGCTPFESVGNAFDPNFHEAVMQEEVADYPERTVIREFQKGYTLKERLLRPAMVVVSKAAGDT</sequence>